<gene>
    <name type="primary">Wdhd1</name>
    <name type="synonym">And1</name>
</gene>
<proteinExistence type="evidence at protein level"/>
<protein>
    <recommendedName>
        <fullName>WD repeat and HMG-box DNA-binding protein 1</fullName>
    </recommendedName>
    <alternativeName>
        <fullName>Acidic nucleoplasmic DNA-binding protein 1</fullName>
        <shortName>And-1</shortName>
    </alternativeName>
</protein>
<reference key="1">
    <citation type="journal article" date="2004" name="Genome Res.">
        <title>The status, quality, and expansion of the NIH full-length cDNA project: the Mammalian Gene Collection (MGC).</title>
        <authorList>
            <consortium name="The MGC Project Team"/>
        </authorList>
    </citation>
    <scope>NUCLEOTIDE SEQUENCE [LARGE SCALE MRNA] (ISOFORM 3)</scope>
    <source>
        <tissue>Embryo</tissue>
    </source>
</reference>
<reference key="2">
    <citation type="journal article" date="2005" name="Science">
        <title>The transcriptional landscape of the mammalian genome.</title>
        <authorList>
            <person name="Carninci P."/>
            <person name="Kasukawa T."/>
            <person name="Katayama S."/>
            <person name="Gough J."/>
            <person name="Frith M.C."/>
            <person name="Maeda N."/>
            <person name="Oyama R."/>
            <person name="Ravasi T."/>
            <person name="Lenhard B."/>
            <person name="Wells C."/>
            <person name="Kodzius R."/>
            <person name="Shimokawa K."/>
            <person name="Bajic V.B."/>
            <person name="Brenner S.E."/>
            <person name="Batalov S."/>
            <person name="Forrest A.R."/>
            <person name="Zavolan M."/>
            <person name="Davis M.J."/>
            <person name="Wilming L.G."/>
            <person name="Aidinis V."/>
            <person name="Allen J.E."/>
            <person name="Ambesi-Impiombato A."/>
            <person name="Apweiler R."/>
            <person name="Aturaliya R.N."/>
            <person name="Bailey T.L."/>
            <person name="Bansal M."/>
            <person name="Baxter L."/>
            <person name="Beisel K.W."/>
            <person name="Bersano T."/>
            <person name="Bono H."/>
            <person name="Chalk A.M."/>
            <person name="Chiu K.P."/>
            <person name="Choudhary V."/>
            <person name="Christoffels A."/>
            <person name="Clutterbuck D.R."/>
            <person name="Crowe M.L."/>
            <person name="Dalla E."/>
            <person name="Dalrymple B.P."/>
            <person name="de Bono B."/>
            <person name="Della Gatta G."/>
            <person name="di Bernardo D."/>
            <person name="Down T."/>
            <person name="Engstrom P."/>
            <person name="Fagiolini M."/>
            <person name="Faulkner G."/>
            <person name="Fletcher C.F."/>
            <person name="Fukushima T."/>
            <person name="Furuno M."/>
            <person name="Futaki S."/>
            <person name="Gariboldi M."/>
            <person name="Georgii-Hemming P."/>
            <person name="Gingeras T.R."/>
            <person name="Gojobori T."/>
            <person name="Green R.E."/>
            <person name="Gustincich S."/>
            <person name="Harbers M."/>
            <person name="Hayashi Y."/>
            <person name="Hensch T.K."/>
            <person name="Hirokawa N."/>
            <person name="Hill D."/>
            <person name="Huminiecki L."/>
            <person name="Iacono M."/>
            <person name="Ikeo K."/>
            <person name="Iwama A."/>
            <person name="Ishikawa T."/>
            <person name="Jakt M."/>
            <person name="Kanapin A."/>
            <person name="Katoh M."/>
            <person name="Kawasawa Y."/>
            <person name="Kelso J."/>
            <person name="Kitamura H."/>
            <person name="Kitano H."/>
            <person name="Kollias G."/>
            <person name="Krishnan S.P."/>
            <person name="Kruger A."/>
            <person name="Kummerfeld S.K."/>
            <person name="Kurochkin I.V."/>
            <person name="Lareau L.F."/>
            <person name="Lazarevic D."/>
            <person name="Lipovich L."/>
            <person name="Liu J."/>
            <person name="Liuni S."/>
            <person name="McWilliam S."/>
            <person name="Madan Babu M."/>
            <person name="Madera M."/>
            <person name="Marchionni L."/>
            <person name="Matsuda H."/>
            <person name="Matsuzawa S."/>
            <person name="Miki H."/>
            <person name="Mignone F."/>
            <person name="Miyake S."/>
            <person name="Morris K."/>
            <person name="Mottagui-Tabar S."/>
            <person name="Mulder N."/>
            <person name="Nakano N."/>
            <person name="Nakauchi H."/>
            <person name="Ng P."/>
            <person name="Nilsson R."/>
            <person name="Nishiguchi S."/>
            <person name="Nishikawa S."/>
            <person name="Nori F."/>
            <person name="Ohara O."/>
            <person name="Okazaki Y."/>
            <person name="Orlando V."/>
            <person name="Pang K.C."/>
            <person name="Pavan W.J."/>
            <person name="Pavesi G."/>
            <person name="Pesole G."/>
            <person name="Petrovsky N."/>
            <person name="Piazza S."/>
            <person name="Reed J."/>
            <person name="Reid J.F."/>
            <person name="Ring B.Z."/>
            <person name="Ringwald M."/>
            <person name="Rost B."/>
            <person name="Ruan Y."/>
            <person name="Salzberg S.L."/>
            <person name="Sandelin A."/>
            <person name="Schneider C."/>
            <person name="Schoenbach C."/>
            <person name="Sekiguchi K."/>
            <person name="Semple C.A."/>
            <person name="Seno S."/>
            <person name="Sessa L."/>
            <person name="Sheng Y."/>
            <person name="Shibata Y."/>
            <person name="Shimada H."/>
            <person name="Shimada K."/>
            <person name="Silva D."/>
            <person name="Sinclair B."/>
            <person name="Sperling S."/>
            <person name="Stupka E."/>
            <person name="Sugiura K."/>
            <person name="Sultana R."/>
            <person name="Takenaka Y."/>
            <person name="Taki K."/>
            <person name="Tammoja K."/>
            <person name="Tan S.L."/>
            <person name="Tang S."/>
            <person name="Taylor M.S."/>
            <person name="Tegner J."/>
            <person name="Teichmann S.A."/>
            <person name="Ueda H.R."/>
            <person name="van Nimwegen E."/>
            <person name="Verardo R."/>
            <person name="Wei C.L."/>
            <person name="Yagi K."/>
            <person name="Yamanishi H."/>
            <person name="Zabarovsky E."/>
            <person name="Zhu S."/>
            <person name="Zimmer A."/>
            <person name="Hide W."/>
            <person name="Bult C."/>
            <person name="Grimmond S.M."/>
            <person name="Teasdale R.D."/>
            <person name="Liu E.T."/>
            <person name="Brusic V."/>
            <person name="Quackenbush J."/>
            <person name="Wahlestedt C."/>
            <person name="Mattick J.S."/>
            <person name="Hume D.A."/>
            <person name="Kai C."/>
            <person name="Sasaki D."/>
            <person name="Tomaru Y."/>
            <person name="Fukuda S."/>
            <person name="Kanamori-Katayama M."/>
            <person name="Suzuki M."/>
            <person name="Aoki J."/>
            <person name="Arakawa T."/>
            <person name="Iida J."/>
            <person name="Imamura K."/>
            <person name="Itoh M."/>
            <person name="Kato T."/>
            <person name="Kawaji H."/>
            <person name="Kawagashira N."/>
            <person name="Kawashima T."/>
            <person name="Kojima M."/>
            <person name="Kondo S."/>
            <person name="Konno H."/>
            <person name="Nakano K."/>
            <person name="Ninomiya N."/>
            <person name="Nishio T."/>
            <person name="Okada M."/>
            <person name="Plessy C."/>
            <person name="Shibata K."/>
            <person name="Shiraki T."/>
            <person name="Suzuki S."/>
            <person name="Tagami M."/>
            <person name="Waki K."/>
            <person name="Watahiki A."/>
            <person name="Okamura-Oho Y."/>
            <person name="Suzuki H."/>
            <person name="Kawai J."/>
            <person name="Hayashizaki Y."/>
        </authorList>
    </citation>
    <scope>NUCLEOTIDE SEQUENCE [LARGE SCALE MRNA] OF 1-933 (ISOFORMS 1 AND 2)</scope>
    <source>
        <strain>C57BL/6J</strain>
        <tissue>Bone</tissue>
        <tissue>Kidney</tissue>
    </source>
</reference>
<reference key="3">
    <citation type="journal article" date="2009" name="Immunity">
        <title>The phagosomal proteome in interferon-gamma-activated macrophages.</title>
        <authorList>
            <person name="Trost M."/>
            <person name="English L."/>
            <person name="Lemieux S."/>
            <person name="Courcelles M."/>
            <person name="Desjardins M."/>
            <person name="Thibault P."/>
        </authorList>
    </citation>
    <scope>PHOSPHORYLATION [LARGE SCALE ANALYSIS] AT SER-377</scope>
    <scope>IDENTIFICATION BY MASS SPECTROMETRY [LARGE SCALE ANALYSIS]</scope>
</reference>
<reference key="4">
    <citation type="journal article" date="2009" name="Mol. Cell. Proteomics">
        <title>Large scale localization of protein phosphorylation by use of electron capture dissociation mass spectrometry.</title>
        <authorList>
            <person name="Sweet S.M."/>
            <person name="Bailey C.M."/>
            <person name="Cunningham D.L."/>
            <person name="Heath J.K."/>
            <person name="Cooper H.J."/>
        </authorList>
    </citation>
    <scope>PHOSPHORYLATION [LARGE SCALE ANALYSIS] AT SER-821</scope>
    <scope>IDENTIFICATION BY MASS SPECTROMETRY [LARGE SCALE ANALYSIS]</scope>
    <source>
        <tissue>Embryonic fibroblast</tissue>
    </source>
</reference>
<reference key="5">
    <citation type="journal article" date="2010" name="Cell">
        <title>A tissue-specific atlas of mouse protein phosphorylation and expression.</title>
        <authorList>
            <person name="Huttlin E.L."/>
            <person name="Jedrychowski M.P."/>
            <person name="Elias J.E."/>
            <person name="Goswami T."/>
            <person name="Rad R."/>
            <person name="Beausoleil S.A."/>
            <person name="Villen J."/>
            <person name="Haas W."/>
            <person name="Sowa M.E."/>
            <person name="Gygi S.P."/>
        </authorList>
    </citation>
    <scope>PHOSPHORYLATION [LARGE SCALE ANALYSIS] AT THR-819 AND SER-821</scope>
    <scope>IDENTIFICATION BY MASS SPECTROMETRY [LARGE SCALE ANALYSIS]</scope>
    <source>
        <tissue>Lung</tissue>
        <tissue>Spleen</tissue>
        <tissue>Testis</tissue>
    </source>
</reference>
<reference key="6">
    <citation type="journal article" date="2013" name="Mol. Cell">
        <title>SIRT5-mediated lysine desuccinylation impacts diverse metabolic pathways.</title>
        <authorList>
            <person name="Park J."/>
            <person name="Chen Y."/>
            <person name="Tishkoff D.X."/>
            <person name="Peng C."/>
            <person name="Tan M."/>
            <person name="Dai L."/>
            <person name="Xie Z."/>
            <person name="Zhang Y."/>
            <person name="Zwaans B.M."/>
            <person name="Skinner M.E."/>
            <person name="Lombard D.B."/>
            <person name="Zhao Y."/>
        </authorList>
    </citation>
    <scope>ACETYLATION [LARGE SCALE ANALYSIS] AT LYS-664</scope>
    <scope>IDENTIFICATION BY MASS SPECTROMETRY [LARGE SCALE ANALYSIS]</scope>
    <source>
        <tissue>Embryonic fibroblast</tissue>
    </source>
</reference>
<organism>
    <name type="scientific">Mus musculus</name>
    <name type="common">Mouse</name>
    <dbReference type="NCBI Taxonomy" id="10090"/>
    <lineage>
        <taxon>Eukaryota</taxon>
        <taxon>Metazoa</taxon>
        <taxon>Chordata</taxon>
        <taxon>Craniata</taxon>
        <taxon>Vertebrata</taxon>
        <taxon>Euteleostomi</taxon>
        <taxon>Mammalia</taxon>
        <taxon>Eutheria</taxon>
        <taxon>Euarchontoglires</taxon>
        <taxon>Glires</taxon>
        <taxon>Rodentia</taxon>
        <taxon>Myomorpha</taxon>
        <taxon>Muroidea</taxon>
        <taxon>Muridae</taxon>
        <taxon>Murinae</taxon>
        <taxon>Mus</taxon>
        <taxon>Mus</taxon>
    </lineage>
</organism>
<keyword id="KW-0007">Acetylation</keyword>
<keyword id="KW-0025">Alternative splicing</keyword>
<keyword id="KW-0238">DNA-binding</keyword>
<keyword id="KW-1017">Isopeptide bond</keyword>
<keyword id="KW-0539">Nucleus</keyword>
<keyword id="KW-0597">Phosphoprotein</keyword>
<keyword id="KW-1185">Reference proteome</keyword>
<keyword id="KW-0677">Repeat</keyword>
<keyword id="KW-0832">Ubl conjugation</keyword>
<keyword id="KW-0853">WD repeat</keyword>
<comment type="function">
    <text evidence="1">Core replisome component that acts as a replication initiation factor. Binds directly to the CMG complex and functions as a hub to recruit additional proteins to the replication fork.</text>
</comment>
<comment type="subunit">
    <text evidence="1">Trimer. Interacts with the polymerase alpha catalytic subunit POLA1. Interacts with MCM10. Interacts with DNA2. Interacts with CDC45 and GINS2 subunit of GINS complex; these interactions associate WDHD1 with the CMG helicase complex.</text>
</comment>
<comment type="subcellular location">
    <subcellularLocation>
        <location evidence="1">Nucleus</location>
        <location evidence="1">Nucleoplasm</location>
    </subcellularLocation>
</comment>
<comment type="alternative products">
    <event type="alternative splicing"/>
    <isoform>
        <id>P59328-1</id>
        <name>1</name>
        <sequence type="displayed"/>
    </isoform>
    <isoform>
        <id>P59328-2</id>
        <name>2</name>
        <sequence type="described" ref="VSP_006757 VSP_006758"/>
    </isoform>
    <isoform>
        <id>P59328-3</id>
        <name>3</name>
        <sequence type="described" ref="VSP_016898"/>
    </isoform>
</comment>
<feature type="chain" id="PRO_0000051339" description="WD repeat and HMG-box DNA-binding protein 1">
    <location>
        <begin position="1"/>
        <end position="1117"/>
    </location>
</feature>
<feature type="repeat" description="WD 1">
    <location>
        <begin position="11"/>
        <end position="50"/>
    </location>
</feature>
<feature type="repeat" description="WD 2">
    <location>
        <begin position="52"/>
        <end position="91"/>
    </location>
</feature>
<feature type="repeat" description="WD 3">
    <location>
        <begin position="93"/>
        <end position="131"/>
    </location>
</feature>
<feature type="repeat" description="WD 4">
    <location>
        <begin position="134"/>
        <end position="173"/>
    </location>
</feature>
<feature type="repeat" description="WD 5">
    <location>
        <begin position="184"/>
        <end position="223"/>
    </location>
</feature>
<feature type="repeat" description="WD 6">
    <location>
        <begin position="228"/>
        <end position="267"/>
    </location>
</feature>
<feature type="repeat" description="WD 7">
    <location>
        <begin position="271"/>
        <end position="310"/>
    </location>
</feature>
<feature type="DNA-binding region" description="HMG box" evidence="2">
    <location>
        <begin position="1004"/>
        <end position="1073"/>
    </location>
</feature>
<feature type="region of interest" description="Disordered" evidence="3">
    <location>
        <begin position="816"/>
        <end position="885"/>
    </location>
</feature>
<feature type="region of interest" description="Disordered" evidence="3">
    <location>
        <begin position="911"/>
        <end position="1005"/>
    </location>
</feature>
<feature type="region of interest" description="Disordered" evidence="3">
    <location>
        <begin position="1054"/>
        <end position="1074"/>
    </location>
</feature>
<feature type="compositionally biased region" description="Basic and acidic residues" evidence="3">
    <location>
        <begin position="861"/>
        <end position="872"/>
    </location>
</feature>
<feature type="compositionally biased region" description="Polar residues" evidence="3">
    <location>
        <begin position="873"/>
        <end position="885"/>
    </location>
</feature>
<feature type="compositionally biased region" description="Polar residues" evidence="3">
    <location>
        <begin position="917"/>
        <end position="943"/>
    </location>
</feature>
<feature type="compositionally biased region" description="Polar residues" evidence="3">
    <location>
        <begin position="962"/>
        <end position="974"/>
    </location>
</feature>
<feature type="compositionally biased region" description="Basic and acidic residues" evidence="3">
    <location>
        <begin position="975"/>
        <end position="987"/>
    </location>
</feature>
<feature type="compositionally biased region" description="Polar residues" evidence="3">
    <location>
        <begin position="988"/>
        <end position="1004"/>
    </location>
</feature>
<feature type="modified residue" description="Phosphoserine" evidence="1">
    <location>
        <position position="333"/>
    </location>
</feature>
<feature type="modified residue" description="Phosphoserine" evidence="8">
    <location>
        <position position="377"/>
    </location>
</feature>
<feature type="modified residue" description="N6-acetyllysine" evidence="10">
    <location>
        <position position="664"/>
    </location>
</feature>
<feature type="modified residue" description="Phosphothreonine" evidence="9">
    <location>
        <position position="819"/>
    </location>
</feature>
<feature type="modified residue" description="Phosphoserine" evidence="7 9">
    <location>
        <position position="821"/>
    </location>
</feature>
<feature type="modified residue" description="Phosphoserine" evidence="1">
    <location>
        <position position="910"/>
    </location>
</feature>
<feature type="modified residue" description="Phosphoserine" evidence="1">
    <location>
        <position position="923"/>
    </location>
</feature>
<feature type="modified residue" description="N6-acetyllysine" evidence="1">
    <location>
        <position position="953"/>
    </location>
</feature>
<feature type="modified residue" description="Phosphoserine" evidence="1">
    <location>
        <position position="1030"/>
    </location>
</feature>
<feature type="cross-link" description="Glycyl lysine isopeptide (Lys-Gly) (interchain with G-Cter in SUMO2)" evidence="1">
    <location>
        <position position="390"/>
    </location>
</feature>
<feature type="cross-link" description="Glycyl lysine isopeptide (Lys-Gly) (interchain with G-Cter in SUMO1); alternate" evidence="1">
    <location>
        <position position="1116"/>
    </location>
</feature>
<feature type="cross-link" description="Glycyl lysine isopeptide (Lys-Gly) (interchain with G-Cter in SUMO2); alternate" evidence="1">
    <location>
        <position position="1116"/>
    </location>
</feature>
<feature type="splice variant" id="VSP_016898" description="In isoform 3." evidence="4">
    <location>
        <begin position="314"/>
        <end position="350"/>
    </location>
</feature>
<feature type="splice variant" id="VSP_006757" description="In isoform 2." evidence="5">
    <original>TPCYVDSEGCVR</original>
    <variation>KIIFFLYIKDIF</variation>
    <location>
        <begin position="630"/>
        <end position="641"/>
    </location>
</feature>
<feature type="splice variant" id="VSP_006758" description="In isoform 2." evidence="5">
    <location>
        <begin position="642"/>
        <end position="1117"/>
    </location>
</feature>
<feature type="sequence conflict" description="In Ref. 2; BAC29408." evidence="6" ref="2">
    <original>G</original>
    <variation>V</variation>
    <location>
        <position position="54"/>
    </location>
</feature>
<feature type="sequence conflict" description="In Ref. 2; BAC29408." evidence="6" ref="2">
    <original>S</original>
    <variation>P</variation>
    <location>
        <position position="350"/>
    </location>
</feature>
<evidence type="ECO:0000250" key="1">
    <source>
        <dbReference type="UniProtKB" id="O75717"/>
    </source>
</evidence>
<evidence type="ECO:0000255" key="2">
    <source>
        <dbReference type="PROSITE-ProRule" id="PRU00267"/>
    </source>
</evidence>
<evidence type="ECO:0000256" key="3">
    <source>
        <dbReference type="SAM" id="MobiDB-lite"/>
    </source>
</evidence>
<evidence type="ECO:0000303" key="4">
    <source>
    </source>
</evidence>
<evidence type="ECO:0000303" key="5">
    <source>
    </source>
</evidence>
<evidence type="ECO:0000305" key="6"/>
<evidence type="ECO:0007744" key="7">
    <source>
    </source>
</evidence>
<evidence type="ECO:0007744" key="8">
    <source>
    </source>
</evidence>
<evidence type="ECO:0007744" key="9">
    <source>
    </source>
</evidence>
<evidence type="ECO:0007744" key="10">
    <source>
    </source>
</evidence>
<dbReference type="EMBL" id="BC063740">
    <property type="protein sequence ID" value="AAH63740.1"/>
    <property type="molecule type" value="mRNA"/>
</dbReference>
<dbReference type="EMBL" id="AK036390">
    <property type="protein sequence ID" value="BAC29408.1"/>
    <property type="molecule type" value="mRNA"/>
</dbReference>
<dbReference type="EMBL" id="AK052690">
    <property type="protein sequence ID" value="BAC35097.1"/>
    <property type="molecule type" value="mRNA"/>
</dbReference>
<dbReference type="RefSeq" id="NP_766186.2">
    <property type="nucleotide sequence ID" value="NM_172598.3"/>
</dbReference>
<dbReference type="SMR" id="P59328"/>
<dbReference type="BioGRID" id="230088">
    <property type="interactions" value="2"/>
</dbReference>
<dbReference type="FunCoup" id="P59328">
    <property type="interactions" value="2705"/>
</dbReference>
<dbReference type="IntAct" id="P59328">
    <property type="interactions" value="1"/>
</dbReference>
<dbReference type="MINT" id="P59328"/>
<dbReference type="STRING" id="10090.ENSMUSP00000141182"/>
<dbReference type="ChEMBL" id="CHEMBL4879444"/>
<dbReference type="GlyGen" id="P59328">
    <property type="glycosylation" value="2 sites, 1 O-linked glycan (1 site)"/>
</dbReference>
<dbReference type="iPTMnet" id="P59328"/>
<dbReference type="PhosphoSitePlus" id="P59328"/>
<dbReference type="SwissPalm" id="P59328"/>
<dbReference type="jPOST" id="P59328"/>
<dbReference type="PaxDb" id="10090-ENSMUSP00000107421"/>
<dbReference type="PeptideAtlas" id="P59328"/>
<dbReference type="ProteomicsDB" id="297935">
    <molecule id="P59328-1"/>
</dbReference>
<dbReference type="ProteomicsDB" id="297936">
    <molecule id="P59328-2"/>
</dbReference>
<dbReference type="ProteomicsDB" id="297937">
    <molecule id="P59328-3"/>
</dbReference>
<dbReference type="Pumba" id="P59328"/>
<dbReference type="Antibodypedia" id="44">
    <property type="antibodies" value="176 antibodies from 28 providers"/>
</dbReference>
<dbReference type="DNASU" id="218973"/>
<dbReference type="Ensembl" id="ENSMUST00000111790.2">
    <molecule id="P59328-2"/>
    <property type="protein sequence ID" value="ENSMUSP00000107420.2"/>
    <property type="gene ID" value="ENSMUSG00000037572.18"/>
</dbReference>
<dbReference type="GeneID" id="218973"/>
<dbReference type="KEGG" id="mmu:218973"/>
<dbReference type="UCSC" id="uc007thu.2">
    <molecule id="P59328-3"/>
    <property type="organism name" value="mouse"/>
</dbReference>
<dbReference type="UCSC" id="uc007thv.2">
    <molecule id="P59328-1"/>
    <property type="organism name" value="mouse"/>
</dbReference>
<dbReference type="UCSC" id="uc007thw.2">
    <molecule id="P59328-2"/>
    <property type="organism name" value="mouse"/>
</dbReference>
<dbReference type="AGR" id="MGI:2443514"/>
<dbReference type="CTD" id="11169"/>
<dbReference type="MGI" id="MGI:2443514">
    <property type="gene designation" value="Wdhd1"/>
</dbReference>
<dbReference type="VEuPathDB" id="HostDB:ENSMUSG00000037572"/>
<dbReference type="eggNOG" id="KOG1274">
    <property type="taxonomic scope" value="Eukaryota"/>
</dbReference>
<dbReference type="GeneTree" id="ENSGT00390000002030"/>
<dbReference type="HOGENOM" id="CLU_004219_6_0_1"/>
<dbReference type="InParanoid" id="P59328"/>
<dbReference type="OMA" id="RYAHTNG"/>
<dbReference type="PhylomeDB" id="P59328"/>
<dbReference type="BioGRID-ORCS" id="218973">
    <property type="hits" value="9 hits in 25 CRISPR screens"/>
</dbReference>
<dbReference type="ChiTaRS" id="Wdhd1">
    <property type="organism name" value="mouse"/>
</dbReference>
<dbReference type="PRO" id="PR:P59328"/>
<dbReference type="Proteomes" id="UP000000589">
    <property type="component" value="Chromosome 14"/>
</dbReference>
<dbReference type="RNAct" id="P59328">
    <property type="molecule type" value="protein"/>
</dbReference>
<dbReference type="Bgee" id="ENSMUSG00000037572">
    <property type="expression patterns" value="Expressed in otic placode and 189 other cell types or tissues"/>
</dbReference>
<dbReference type="ExpressionAtlas" id="P59328">
    <property type="expression patterns" value="baseline and differential"/>
</dbReference>
<dbReference type="GO" id="GO:0000775">
    <property type="term" value="C:chromosome, centromeric region"/>
    <property type="evidence" value="ECO:0000314"/>
    <property type="project" value="MGI"/>
</dbReference>
<dbReference type="GO" id="GO:0005654">
    <property type="term" value="C:nucleoplasm"/>
    <property type="evidence" value="ECO:0007669"/>
    <property type="project" value="UniProtKB-SubCell"/>
</dbReference>
<dbReference type="GO" id="GO:0003682">
    <property type="term" value="F:chromatin binding"/>
    <property type="evidence" value="ECO:0000314"/>
    <property type="project" value="MGI"/>
</dbReference>
<dbReference type="GO" id="GO:0003677">
    <property type="term" value="F:DNA binding"/>
    <property type="evidence" value="ECO:0007669"/>
    <property type="project" value="UniProtKB-KW"/>
</dbReference>
<dbReference type="GO" id="GO:0003723">
    <property type="term" value="F:RNA binding"/>
    <property type="evidence" value="ECO:0000314"/>
    <property type="project" value="MGI"/>
</dbReference>
<dbReference type="GO" id="GO:0070063">
    <property type="term" value="F:RNA polymerase binding"/>
    <property type="evidence" value="ECO:0000314"/>
    <property type="project" value="MGI"/>
</dbReference>
<dbReference type="GO" id="GO:0006261">
    <property type="term" value="P:DNA-templated DNA replication"/>
    <property type="evidence" value="ECO:0007669"/>
    <property type="project" value="InterPro"/>
</dbReference>
<dbReference type="GO" id="GO:0140462">
    <property type="term" value="P:pericentric heterochromatin organization"/>
    <property type="evidence" value="ECO:0000315"/>
    <property type="project" value="MGI"/>
</dbReference>
<dbReference type="GO" id="GO:0033044">
    <property type="term" value="P:regulation of chromosome organization"/>
    <property type="evidence" value="ECO:0000315"/>
    <property type="project" value="MGI"/>
</dbReference>
<dbReference type="GO" id="GO:0006396">
    <property type="term" value="P:RNA processing"/>
    <property type="evidence" value="ECO:0000315"/>
    <property type="project" value="MGI"/>
</dbReference>
<dbReference type="CDD" id="cd21993">
    <property type="entry name" value="HMG-box_WDHD1"/>
    <property type="match status" value="1"/>
</dbReference>
<dbReference type="CDD" id="cd00200">
    <property type="entry name" value="WD40"/>
    <property type="match status" value="1"/>
</dbReference>
<dbReference type="FunFam" id="2.130.10.10:FF:000338">
    <property type="entry name" value="WD repeat and HMG-box DNA binding protein 1"/>
    <property type="match status" value="1"/>
</dbReference>
<dbReference type="FunFam" id="2.130.10.10:FF:000478">
    <property type="entry name" value="WD repeat and HMG-box DNA binding protein 1"/>
    <property type="match status" value="1"/>
</dbReference>
<dbReference type="FunFam" id="1.10.30.10:FF:000028">
    <property type="entry name" value="WD repeat and HMG-box DNA-binding protein 1"/>
    <property type="match status" value="1"/>
</dbReference>
<dbReference type="Gene3D" id="1.10.30.10">
    <property type="entry name" value="High mobility group box domain"/>
    <property type="match status" value="1"/>
</dbReference>
<dbReference type="Gene3D" id="2.130.10.10">
    <property type="entry name" value="YVTN repeat-like/Quinoprotein amine dehydrogenase"/>
    <property type="match status" value="2"/>
</dbReference>
<dbReference type="InterPro" id="IPR055339">
    <property type="entry name" value="HMG-box_WDHD1"/>
</dbReference>
<dbReference type="InterPro" id="IPR009071">
    <property type="entry name" value="HMG_box_dom"/>
</dbReference>
<dbReference type="InterPro" id="IPR036910">
    <property type="entry name" value="HMG_box_dom_sf"/>
</dbReference>
<dbReference type="InterPro" id="IPR015943">
    <property type="entry name" value="WD40/YVTN_repeat-like_dom_sf"/>
</dbReference>
<dbReference type="InterPro" id="IPR019775">
    <property type="entry name" value="WD40_repeat_CS"/>
</dbReference>
<dbReference type="InterPro" id="IPR036322">
    <property type="entry name" value="WD40_repeat_dom_sf"/>
</dbReference>
<dbReference type="InterPro" id="IPR001680">
    <property type="entry name" value="WD40_rpt"/>
</dbReference>
<dbReference type="InterPro" id="IPR022100">
    <property type="entry name" value="WDHD1/CFT4_beta-prop_2nd"/>
</dbReference>
<dbReference type="InterPro" id="IPR048591">
    <property type="entry name" value="WDHD1/CFT4_hel"/>
</dbReference>
<dbReference type="PANTHER" id="PTHR19932">
    <property type="entry name" value="WD REPEAT AND HMG-BOX DNA BINDING PROTEIN"/>
    <property type="match status" value="1"/>
</dbReference>
<dbReference type="PANTHER" id="PTHR19932:SF10">
    <property type="entry name" value="WD REPEAT AND HMG-BOX DNA-BINDING PROTEIN 1"/>
    <property type="match status" value="1"/>
</dbReference>
<dbReference type="Pfam" id="PF20946">
    <property type="entry name" value="Ctf4_C"/>
    <property type="match status" value="1"/>
</dbReference>
<dbReference type="Pfam" id="PF24815">
    <property type="entry name" value="HMG_WDHD1"/>
    <property type="match status" value="1"/>
</dbReference>
<dbReference type="Pfam" id="PF12341">
    <property type="entry name" value="Mcl1_mid"/>
    <property type="match status" value="1"/>
</dbReference>
<dbReference type="Pfam" id="PF24817">
    <property type="entry name" value="WD40_WDHD1_1st"/>
    <property type="match status" value="1"/>
</dbReference>
<dbReference type="SMART" id="SM00398">
    <property type="entry name" value="HMG"/>
    <property type="match status" value="1"/>
</dbReference>
<dbReference type="SMART" id="SM00320">
    <property type="entry name" value="WD40"/>
    <property type="match status" value="5"/>
</dbReference>
<dbReference type="SUPFAM" id="SSF47095">
    <property type="entry name" value="HMG-box"/>
    <property type="match status" value="1"/>
</dbReference>
<dbReference type="SUPFAM" id="SSF50978">
    <property type="entry name" value="WD40 repeat-like"/>
    <property type="match status" value="1"/>
</dbReference>
<dbReference type="PROSITE" id="PS50118">
    <property type="entry name" value="HMG_BOX_2"/>
    <property type="match status" value="1"/>
</dbReference>
<dbReference type="PROSITE" id="PS00678">
    <property type="entry name" value="WD_REPEATS_1"/>
    <property type="match status" value="2"/>
</dbReference>
<dbReference type="PROSITE" id="PS50082">
    <property type="entry name" value="WD_REPEATS_2"/>
    <property type="match status" value="3"/>
</dbReference>
<dbReference type="PROSITE" id="PS50294">
    <property type="entry name" value="WD_REPEATS_REGION"/>
    <property type="match status" value="1"/>
</dbReference>
<sequence length="1117" mass="124254">MPATQKPMRYGHTEGHTEVCFDDSGSYIVTCGSDGDVRMWEDLDDDDPKSVNVGEKAFSCALKNGKLVTAVSNNTVQVYTFPEGVPDGILTRFTTNANHVVFNGAGNKIAAGSSDFLVKVVDVMDNSQQQTFRGHDAPVLSLSFDPKDIFLASASCDGTVRVWNISDQTCAVSWPVLQKSNDVVNAKSICRLAWQPKAGKLLAVPVEKSVKLYRRETWSNPFDLSDSSISQTLNIVTWSPCGQYLAAGAINGLIVVWNVETKDCMERVKHEKGYAICGLAWHPTCSRICYTDVEGNLGVLENVCDLSGKVSSNKVSSRVEKDYNDLFDGDDTSSAGDFLNDNAVEIPSFSKGIINEDDDNDDIMLAADHDLGDDENSVDVTMLKADLSHKEEGDDDQARSIHNLPLIRPQRPFYDGPMPTPRQKPFQSSSTPLHLSHRFMVWNSVGIIRCYNDDQDSAIDVEFHDTSIHHATHLLNAFNYTMGTLSHEAILLACESADELASKLHCLHFSSWDSSKEWMVDMPQNEDIEAICLGLGWAAAATTALLLRLFTIGGVQKEVFCLPGPVVSMAGHGEQLCIVYHRGTGFDGDQCLGVQLLELGRKKNQVLHGDPLPLTRKSYLTWLGFSAEGTPCYVDSEGCVRMLNRGLGNTWTPVCNIREHCKGKSDHYWVVGIHENPQQLRCIPCKGSRFPPTLPRPAVAILSFKLPYCQTSTEKGQMEEQFWHSVLFHNYLDYLAKNGYDYEESIKNQAVKEQQELLMKMLALSCKLEREFRCVELADLMTQNAVHLAIKYASRSRKLILAQKLSELAAEKAAELAETQSEEEKEEDFREKLNAGYSHTTTEWSRPRVRSQVEDAEDREDTVSEEKPESHNHGQNLFQSANSSDTPALKSGAVFSSSQGWVNPFKVVVSSKEPAVSANSTRSANILDSMNKSSRKSTSLNRMENNEKSPVIKPLTPKPRSKQASAASYFQKRTPQADKTEEVKENPKSSSSDAPAVCLQNSENQRPKTGFQMWLEENRSQILSDNPDISDETDIIKEGMIRFRVLSAEERKAWTNKAKGETASDGAEAKKRKRVVSEICETENQEETVKENLDLSKKQKALNLPANQKLSAFAFKQ</sequence>
<accession>P59328</accession>
<accession>Q6P408</accession>
<name>WDHD1_MOUSE</name>